<keyword id="KW-1015">Disulfide bond</keyword>
<keyword id="KW-0964">Secreted</keyword>
<keyword id="KW-0732">Signal</keyword>
<keyword id="KW-0800">Toxin</keyword>
<name>TX803_LYCSI</name>
<sequence>MKLIIFTGLVLFAIVSLIEAQAENEKACLPQYQVCTDAPGNCCSDLVCDCYGRYKCGARIGRNCFCLQKGVIYKRED</sequence>
<evidence type="ECO:0000250" key="1"/>
<evidence type="ECO:0000255" key="2"/>
<evidence type="ECO:0000305" key="3"/>
<feature type="signal peptide" evidence="2">
    <location>
        <begin position="1"/>
        <end position="20"/>
    </location>
</feature>
<feature type="propeptide" id="PRO_0000401769" evidence="1">
    <location>
        <begin position="21"/>
        <end position="26"/>
    </location>
</feature>
<feature type="chain" id="PRO_0000401770" description="U8-lycotoxin-Ls1r">
    <location>
        <begin position="27"/>
        <end position="77"/>
    </location>
</feature>
<comment type="subcellular location">
    <subcellularLocation>
        <location evidence="1">Secreted</location>
    </subcellularLocation>
</comment>
<comment type="tissue specificity">
    <text>Expressed by the venom gland.</text>
</comment>
<comment type="PTM">
    <text evidence="1">Contains 4 disulfide bonds.</text>
</comment>
<comment type="similarity">
    <text evidence="3">Belongs to the neurotoxin 19 (CSTX) family. 08 (U8-Lctx) subfamily.</text>
</comment>
<comment type="sequence caution" evidence="3">
    <conflict type="erroneous initiation">
        <sequence resource="EMBL-CDS" id="ACI41390"/>
    </conflict>
    <text>Extended N-terminus.</text>
</comment>
<comment type="sequence caution" evidence="3">
    <conflict type="erroneous initiation">
        <sequence resource="EMBL-CDS" id="CAS03659"/>
    </conflict>
    <text>Extended N-terminus.</text>
</comment>
<reference key="1">
    <citation type="journal article" date="2010" name="Zoology">
        <title>Transcriptome analysis of the venom glands of the Chinese wolf spider Lycosa singoriensis.</title>
        <authorList>
            <person name="Zhang Y."/>
            <person name="Chen J."/>
            <person name="Tang X."/>
            <person name="Wang F."/>
            <person name="Jiang L."/>
            <person name="Xiong X."/>
            <person name="Wang M."/>
            <person name="Rong M."/>
            <person name="Liu Z."/>
            <person name="Liang S."/>
        </authorList>
    </citation>
    <scope>NUCLEOTIDE SEQUENCE [LARGE SCALE MRNA]</scope>
    <source>
        <tissue>Venom gland</tissue>
    </source>
</reference>
<proteinExistence type="evidence at transcript level"/>
<accession>B6DCX4</accession>
<dbReference type="EMBL" id="EU926058">
    <property type="protein sequence ID" value="ACI41390.1"/>
    <property type="status" value="ALT_INIT"/>
    <property type="molecule type" value="mRNA"/>
</dbReference>
<dbReference type="EMBL" id="FM864062">
    <property type="protein sequence ID" value="CAS03659.1"/>
    <property type="status" value="ALT_INIT"/>
    <property type="molecule type" value="mRNA"/>
</dbReference>
<dbReference type="SMR" id="B6DCX4"/>
<dbReference type="ArachnoServer" id="AS000997">
    <property type="toxin name" value="U8-lycotoxin-Ls1r"/>
</dbReference>
<dbReference type="GO" id="GO:0005576">
    <property type="term" value="C:extracellular region"/>
    <property type="evidence" value="ECO:0007669"/>
    <property type="project" value="UniProtKB-SubCell"/>
</dbReference>
<dbReference type="GO" id="GO:0090729">
    <property type="term" value="F:toxin activity"/>
    <property type="evidence" value="ECO:0007669"/>
    <property type="project" value="UniProtKB-KW"/>
</dbReference>
<dbReference type="InterPro" id="IPR019553">
    <property type="entry name" value="Spider_toxin_CSTX_knottin"/>
</dbReference>
<dbReference type="Pfam" id="PF10530">
    <property type="entry name" value="Toxin_35"/>
    <property type="match status" value="1"/>
</dbReference>
<protein>
    <recommendedName>
        <fullName>U8-lycotoxin-Ls1r</fullName>
    </recommendedName>
    <alternativeName>
        <fullName>Toxin-like structure LSTX-H3</fullName>
    </alternativeName>
</protein>
<organism>
    <name type="scientific">Lycosa singoriensis</name>
    <name type="common">Wolf spider</name>
    <name type="synonym">Aranea singoriensis</name>
    <dbReference type="NCBI Taxonomy" id="434756"/>
    <lineage>
        <taxon>Eukaryota</taxon>
        <taxon>Metazoa</taxon>
        <taxon>Ecdysozoa</taxon>
        <taxon>Arthropoda</taxon>
        <taxon>Chelicerata</taxon>
        <taxon>Arachnida</taxon>
        <taxon>Araneae</taxon>
        <taxon>Araneomorphae</taxon>
        <taxon>Entelegynae</taxon>
        <taxon>Lycosoidea</taxon>
        <taxon>Lycosidae</taxon>
        <taxon>Lycosa</taxon>
    </lineage>
</organism>